<sequence>MDTSENAASAAEQQPTQQIDQLTVPNAPDGGSSAPAPSTSPNSISPSNPTGTPAPGASAQTPNPNAAGASASGSANYKLMCTLEGHTKSISSAKFSPCGKYLGTSSADKTVKIWNMDHMICERTLTGHKLGVNDIAWSSDSRCVVSASDDKTLKIFEIVTSRMTKTLKGHNNYVFCCNFNPQSSLVVSGSFDESVRIWDVKTGMCIKTLPAHSDPVSAVSFNRDGSLIASGSYDGLVRIWDTANGQCIKTLVDDENPPVAFVKFSPNGKYILASNLDSTLKLWDFSKGKTLKQYTGHENSKYCIFANFSVTGGKWIISGSEDCKIYIWNLQTREIVQCLEGHTQPVLASDCHPVQNIIASGALEPDNKIHIWRSDV</sequence>
<accession>Q17963</accession>
<evidence type="ECO:0000250" key="1"/>
<evidence type="ECO:0000256" key="2">
    <source>
        <dbReference type="SAM" id="MobiDB-lite"/>
    </source>
</evidence>
<evidence type="ECO:0000269" key="3">
    <source>
    </source>
</evidence>
<evidence type="ECO:0000269" key="4">
    <source>
    </source>
</evidence>
<evidence type="ECO:0000269" key="5">
    <source>
    </source>
</evidence>
<evidence type="ECO:0000269" key="6">
    <source>
    </source>
</evidence>
<evidence type="ECO:0000269" key="7">
    <source>
    </source>
</evidence>
<evidence type="ECO:0000269" key="8">
    <source>
    </source>
</evidence>
<evidence type="ECO:0000269" key="9">
    <source>
    </source>
</evidence>
<evidence type="ECO:0000269" key="10">
    <source>
    </source>
</evidence>
<evidence type="ECO:0000269" key="11">
    <source>
    </source>
</evidence>
<evidence type="ECO:0000269" key="12">
    <source>
    </source>
</evidence>
<evidence type="ECO:0000269" key="13">
    <source>
    </source>
</evidence>
<evidence type="ECO:0000305" key="14"/>
<dbReference type="EMBL" id="Z37139">
    <property type="protein sequence ID" value="CAA85487.1"/>
    <property type="molecule type" value="Genomic_DNA"/>
</dbReference>
<dbReference type="PIR" id="T19266">
    <property type="entry name" value="T19266"/>
</dbReference>
<dbReference type="RefSeq" id="NP_497749.1">
    <property type="nucleotide sequence ID" value="NM_065348.10"/>
</dbReference>
<dbReference type="SMR" id="Q17963"/>
<dbReference type="BioGRID" id="40714">
    <property type="interactions" value="24"/>
</dbReference>
<dbReference type="DIP" id="DIP-55118N"/>
<dbReference type="FunCoup" id="Q17963">
    <property type="interactions" value="2267"/>
</dbReference>
<dbReference type="IntAct" id="Q17963">
    <property type="interactions" value="7"/>
</dbReference>
<dbReference type="STRING" id="6239.C14B1.4.2"/>
<dbReference type="PaxDb" id="6239-C14B1.4"/>
<dbReference type="PeptideAtlas" id="Q17963"/>
<dbReference type="EnsemblMetazoa" id="C14B1.4.1">
    <property type="protein sequence ID" value="C14B1.4.1"/>
    <property type="gene ID" value="WBGene00006474"/>
</dbReference>
<dbReference type="GeneID" id="175474"/>
<dbReference type="KEGG" id="cel:CELE_C14B1.4"/>
<dbReference type="AGR" id="WB:WBGene00006474"/>
<dbReference type="CTD" id="175474"/>
<dbReference type="WormBase" id="C14B1.4">
    <property type="protein sequence ID" value="CE00901"/>
    <property type="gene ID" value="WBGene00006474"/>
    <property type="gene designation" value="wdr-5.1"/>
</dbReference>
<dbReference type="eggNOG" id="KOG0266">
    <property type="taxonomic scope" value="Eukaryota"/>
</dbReference>
<dbReference type="GeneTree" id="ENSGT00970000196638"/>
<dbReference type="HOGENOM" id="CLU_000288_57_1_1"/>
<dbReference type="InParanoid" id="Q17963"/>
<dbReference type="OMA" id="CKGHDTA"/>
<dbReference type="OrthoDB" id="674604at2759"/>
<dbReference type="PhylomeDB" id="Q17963"/>
<dbReference type="Reactome" id="R-CEL-3214841">
    <property type="pathway name" value="PKMTs methylate histone lysines"/>
</dbReference>
<dbReference type="Reactome" id="R-CEL-3214858">
    <property type="pathway name" value="RMTs methylate histone arginines"/>
</dbReference>
<dbReference type="Reactome" id="R-CEL-8936459">
    <property type="pathway name" value="RUNX1 regulates genes involved in megakaryocyte differentiation and platelet function"/>
</dbReference>
<dbReference type="Reactome" id="R-CEL-8951664">
    <property type="pathway name" value="Neddylation"/>
</dbReference>
<dbReference type="Reactome" id="R-CEL-9772755">
    <property type="pathway name" value="Formation of WDR5-containing histone-modifying complexes"/>
</dbReference>
<dbReference type="PRO" id="PR:Q17963"/>
<dbReference type="Proteomes" id="UP000001940">
    <property type="component" value="Chromosome III"/>
</dbReference>
<dbReference type="Bgee" id="WBGene00006474">
    <property type="expression patterns" value="Expressed in germ line (C elegans) and 4 other cell types or tissues"/>
</dbReference>
<dbReference type="GO" id="GO:0005737">
    <property type="term" value="C:cytoplasm"/>
    <property type="evidence" value="ECO:0000314"/>
    <property type="project" value="WormBase"/>
</dbReference>
<dbReference type="GO" id="GO:0044666">
    <property type="term" value="C:MLL3/4 complex"/>
    <property type="evidence" value="ECO:0000314"/>
    <property type="project" value="WormBase"/>
</dbReference>
<dbReference type="GO" id="GO:0005634">
    <property type="term" value="C:nucleus"/>
    <property type="evidence" value="ECO:0000314"/>
    <property type="project" value="WormBase"/>
</dbReference>
<dbReference type="GO" id="GO:0048188">
    <property type="term" value="C:Set1C/COMPASS complex"/>
    <property type="evidence" value="ECO:0000318"/>
    <property type="project" value="GO_Central"/>
</dbReference>
<dbReference type="GO" id="GO:0042393">
    <property type="term" value="F:histone binding"/>
    <property type="evidence" value="ECO:0000318"/>
    <property type="project" value="GO_Central"/>
</dbReference>
<dbReference type="GO" id="GO:0061629">
    <property type="term" value="F:RNA polymerase II-specific DNA-binding transcription factor binding"/>
    <property type="evidence" value="ECO:0000353"/>
    <property type="project" value="WormBase"/>
</dbReference>
<dbReference type="GO" id="GO:0006325">
    <property type="term" value="P:chromatin organization"/>
    <property type="evidence" value="ECO:0007669"/>
    <property type="project" value="UniProtKB-KW"/>
</dbReference>
<dbReference type="GO" id="GO:0008340">
    <property type="term" value="P:determination of adult lifespan"/>
    <property type="evidence" value="ECO:0000315"/>
    <property type="project" value="WormBase"/>
</dbReference>
<dbReference type="GO" id="GO:0012501">
    <property type="term" value="P:programmed cell death"/>
    <property type="evidence" value="ECO:0000315"/>
    <property type="project" value="UniProtKB"/>
</dbReference>
<dbReference type="GO" id="GO:0031047">
    <property type="term" value="P:regulatory ncRNA-mediated gene silencing"/>
    <property type="evidence" value="ECO:0007669"/>
    <property type="project" value="UniProtKB-KW"/>
</dbReference>
<dbReference type="GO" id="GO:0060290">
    <property type="term" value="P:transdifferentiation"/>
    <property type="evidence" value="ECO:0000315"/>
    <property type="project" value="WormBase"/>
</dbReference>
<dbReference type="CDD" id="cd00200">
    <property type="entry name" value="WD40"/>
    <property type="match status" value="1"/>
</dbReference>
<dbReference type="FunFam" id="2.130.10.10:FF:000228">
    <property type="entry name" value="COMPASS-like H3K4 histone methylase component WDR5A"/>
    <property type="match status" value="1"/>
</dbReference>
<dbReference type="Gene3D" id="2.130.10.10">
    <property type="entry name" value="YVTN repeat-like/Quinoprotein amine dehydrogenase"/>
    <property type="match status" value="1"/>
</dbReference>
<dbReference type="InterPro" id="IPR020472">
    <property type="entry name" value="G-protein_beta_WD-40_rep"/>
</dbReference>
<dbReference type="InterPro" id="IPR015943">
    <property type="entry name" value="WD40/YVTN_repeat-like_dom_sf"/>
</dbReference>
<dbReference type="InterPro" id="IPR019775">
    <property type="entry name" value="WD40_repeat_CS"/>
</dbReference>
<dbReference type="InterPro" id="IPR036322">
    <property type="entry name" value="WD40_repeat_dom_sf"/>
</dbReference>
<dbReference type="InterPro" id="IPR001680">
    <property type="entry name" value="WD40_rpt"/>
</dbReference>
<dbReference type="PANTHER" id="PTHR22847:SF637">
    <property type="entry name" value="WD REPEAT DOMAIN 5B"/>
    <property type="match status" value="1"/>
</dbReference>
<dbReference type="PANTHER" id="PTHR22847">
    <property type="entry name" value="WD40 REPEAT PROTEIN"/>
    <property type="match status" value="1"/>
</dbReference>
<dbReference type="Pfam" id="PF25175">
    <property type="entry name" value="Beta-prop_WDR5"/>
    <property type="match status" value="1"/>
</dbReference>
<dbReference type="PIRSF" id="PIRSF002394">
    <property type="entry name" value="GN-bd_beta"/>
    <property type="match status" value="1"/>
</dbReference>
<dbReference type="PRINTS" id="PR00320">
    <property type="entry name" value="GPROTEINBRPT"/>
</dbReference>
<dbReference type="SMART" id="SM00320">
    <property type="entry name" value="WD40"/>
    <property type="match status" value="7"/>
</dbReference>
<dbReference type="SUPFAM" id="SSF50978">
    <property type="entry name" value="WD40 repeat-like"/>
    <property type="match status" value="1"/>
</dbReference>
<dbReference type="PROSITE" id="PS00678">
    <property type="entry name" value="WD_REPEATS_1"/>
    <property type="match status" value="5"/>
</dbReference>
<dbReference type="PROSITE" id="PS50082">
    <property type="entry name" value="WD_REPEATS_2"/>
    <property type="match status" value="6"/>
</dbReference>
<dbReference type="PROSITE" id="PS50294">
    <property type="entry name" value="WD_REPEATS_REGION"/>
    <property type="match status" value="1"/>
</dbReference>
<keyword id="KW-0156">Chromatin regulator</keyword>
<keyword id="KW-0217">Developmental protein</keyword>
<keyword id="KW-0539">Nucleus</keyword>
<keyword id="KW-1185">Reference proteome</keyword>
<keyword id="KW-0677">Repeat</keyword>
<keyword id="KW-0943">RNA-mediated gene silencing</keyword>
<keyword id="KW-0804">Transcription</keyword>
<keyword id="KW-0805">Transcription regulation</keyword>
<keyword id="KW-0853">WD repeat</keyword>
<comment type="function">
    <text evidence="3 4 5 6 7 8 9 10 11 12">Contributes to histone modification (PubMed:16710447, PubMed:17967446, PubMed:20188723, PubMed:20555324, PubMed:21455483, PubMed:22012258). May position the N-terminus of histone H3 for efficient trimethylation at 'Lys-4' (PubMed:21455483). Required for di- and trimethylation, particularly for the trimethylation at 'Lys-4' of histone H3 (PubMed:20555324, PubMed:21455483, PubMed:21527717, PubMed:24682813). Not required for demethylation of histone H3 'Lys-27' (PubMed:21455483). H3 'Lys-4' methylation represents a specific tag for epigenetic transcriptional activation, germline establishment, maintenance and function (PubMed:21455483). Implicated in the epigenetic inheritance of lifespan over several generations (PubMed:22012258). Acts in the germline to limit the longevity of the soma, probably by regulating a lipid metabolism pathway that signals from the germline to the intestine, thereby preventing accumulation of mono-unsaturated fatty acids (PubMed:17967446, PubMed:20555324, PubMed:28379943). Required for RNA interference with probable antagonistic role against hpl-2 function (PubMed:17967446). Plays a role in vulval cell fate specification by acting in the synthetic multivulva pathway independent of set-2 (PubMed:17967446). Sex determining protein required in the germline to promote the spermatogenesis to oogenesis switch during the late larval stages of development (PubMed:24682813). Acts with the sex determining factor tra-1, and redundantly with wdr-5.2, to regulate fog-3 expression, which in turn determines germ cell fate (PubMed:24682813). Cooperates with jmjd-3.1, egl-27 and unc-3 to ensure robust transdifferentiation of the Y rectal cell to the PDA motor neuron during larval development (PubMed:25124442).</text>
</comment>
<comment type="subunit">
    <text evidence="7 8 11 13">Component of the SET2 complex (also known as the SET1/COMPASS complex), which contains at least set-2, swd-2.1, cfp-1, rbbp-5, wdr-5.1, dpy-30 and ash-2 (PubMed:31602465). Within the complex, interacts with cfp-1, ash-2, dpy-30 and hda-1 (PubMed:31602465). Interacts with histone H3 both unmethylated and methylated at 'Lys-4' (PubMed:21455483). Interacts with jmjd-3.1, ceh-6, sox-2, sem-4 and egl-27 (PubMed:25124442). Interacts with set-2 (PubMed:21527717).</text>
</comment>
<comment type="subcellular location">
    <subcellularLocation>
        <location evidence="4 10">Nucleus</location>
    </subcellularLocation>
    <text evidence="10">Localized on chromatin in the nucleus.</text>
</comment>
<comment type="tissue specificity">
    <text evidence="4 10">Enriched in the germline (PubMed:17967446, PubMed:24682813). Detected in all nuclei of the embryo (PubMed:17967446). In larvae, expression is detected in the nuclei of seam cells, somatic gonad precursor cells Z1 and Z4, vulval precursor cells, distal tip cells, hypodermal cells, intestinal and muscle cells (PubMed:17967446). Also detected in the neurons from the ventral nerve cord, head and tail region (PubMed:17967446). Expressed in the head and tail region, intestinal cells, muscle cells, cells of the vulva, spermatheca and sheath cells in adults (PubMed:17967446).</text>
</comment>
<comment type="developmental stage">
    <text evidence="4">Detected from the 20 cell embryo stage and continues through to adult, although in a restricted manner.</text>
</comment>
<comment type="disruption phenotype">
    <text evidence="4 10 12">Increase in life span (PubMed:17967446). Longer time span to reach adulthood and reduced brood size resulting in sterility between generations F3 and F4 (PubMed:17967446). Associated embryonic lethality and additional somatic defects at elevated temperatures (PubMed:17967446). Defects in germ cells including defective sperm development and endomitotic oocytes (PubMed:17967446, PubMed:24682813). Significantly reduced H3 'Lys-4' trimethylation in both embryonic and adult germ cells in a sex-independent manner (PubMed:17967446). Increased fog-3 expression at 20 degrees Celsius (PubMed:24682813). At 20 and 25 degrees Celsius, double knockdown mutants with wdr-5.2 have increased fog-3 expression (PubMed:24682813). At 25 degrees Celsius, these mutants have increased wdr-5.2 and fog-1 expression, reduced brood size accompanied by 42% embryonic lethality with 100% of the surviving progeny being sterile (PubMed:24682813). Surviving progeny display enhanced defects in the spermatogenesis to oogenesis transition compared to the single wdr-5.1 knockout with 88% of the gonads only containing sperm (PubMed:24682813). The remaining germ cells in the gonads switch to oogenesis, but the oocytes display either an endoreplication or endomitotic phenotype (PubMed:24682813). Germ cells also have increased expression of the sex determining factor tra-1 in the cytoplasm and as a result there is reduced binding of tra-1 to the fog-3 promoter (PubMed:24682813). RNAi-mediated knockdown leads to an enrichment of mono-unsaturated fatty acids (PubMed:28379943).</text>
</comment>
<comment type="similarity">
    <text evidence="14">Belongs to the WD repeat WDR5/wds family.</text>
</comment>
<reference key="1">
    <citation type="journal article" date="1998" name="Science">
        <title>Genome sequence of the nematode C. elegans: a platform for investigating biology.</title>
        <authorList>
            <consortium name="The C. elegans sequencing consortium"/>
        </authorList>
    </citation>
    <scope>NUCLEOTIDE SEQUENCE [LARGE SCALE GENOMIC DNA]</scope>
    <source>
        <strain>Bristol N2</strain>
    </source>
</reference>
<reference key="2">
    <citation type="journal article" date="2006" name="PLoS Genet.">
        <title>Diverse chromatin remodeling genes antagonize the Rb-involved SynMuv pathways in C. elegans.</title>
        <authorList>
            <person name="Cui M."/>
            <person name="Kim E.B."/>
            <person name="Han M."/>
        </authorList>
    </citation>
    <scope>FUNCTION</scope>
</reference>
<reference key="3">
    <citation type="journal article" date="2007" name="Dev. Biol.">
        <title>Antagonistic functions of SET-2/SET1 and HPL/HP1 proteins in C. elegans development.</title>
        <authorList>
            <person name="Simonet T."/>
            <person name="Dulermo R."/>
            <person name="Schott S."/>
            <person name="Palladino F."/>
        </authorList>
    </citation>
    <scope>FUNCTION</scope>
    <scope>SUBCELLULAR LOCATION</scope>
    <scope>DEVELOPMENTAL STAGE</scope>
    <scope>TISSUE SPECIFICITY</scope>
    <scope>DISRUPTION PHENOTYPE</scope>
</reference>
<reference key="4">
    <citation type="journal article" date="2010" name="Dev. Biol.">
        <title>Methylation and demethylation activities of a C. elegans MLL-like complex attenuate RAS signalling.</title>
        <authorList>
            <person name="Fisher K."/>
            <person name="Southall S.M."/>
            <person name="Wilson J.R."/>
            <person name="Poulin G.B."/>
        </authorList>
    </citation>
    <scope>FUNCTION</scope>
</reference>
<reference key="5">
    <citation type="journal article" date="2010" name="Nature">
        <title>Members of the H3K4 trimethylation complex regulate lifespan in a germline-dependent manner in C. elegans.</title>
        <authorList>
            <person name="Greer E.L."/>
            <person name="Maures T.J."/>
            <person name="Hauswirth A.G."/>
            <person name="Green E.M."/>
            <person name="Leeman D.S."/>
            <person name="Maro G.S."/>
            <person name="Han S."/>
            <person name="Banko M.R."/>
            <person name="Gozani O."/>
            <person name="Brunet A."/>
        </authorList>
    </citation>
    <scope>FUNCTION</scope>
</reference>
<reference key="6">
    <citation type="journal article" date="2011" name="PLoS Genet.">
        <title>A role for Set1/MLL-related components in epigenetic regulation of the Caenorhabditis elegans germ line.</title>
        <authorList>
            <person name="Li T."/>
            <person name="Kelly W.G."/>
        </authorList>
    </citation>
    <scope>FUNCTION</scope>
    <scope>INTERACTION WITH HISTONE H3</scope>
</reference>
<reference key="7">
    <citation type="journal article" date="2011" name="Nature">
        <title>Transgenerational epigenetic inheritance of longevity in Caenorhabditis elegans.</title>
        <authorList>
            <person name="Greer E.L."/>
            <person name="Maures T.J."/>
            <person name="Ucar D."/>
            <person name="Hauswirth A.G."/>
            <person name="Mancini E."/>
            <person name="Lim J.P."/>
            <person name="Benayoun B.A."/>
            <person name="Shi Y."/>
            <person name="Brunet A."/>
        </authorList>
    </citation>
    <scope>FUNCTION</scope>
</reference>
<reference key="8">
    <citation type="journal article" date="2011" name="Proc. Natl. Acad. Sci. U.S.A.">
        <title>Caenorhabditis elegans chromatin-associated proteins SET-2 and ASH-2 are differentially required for histone H3 Lys 4 methylation in embryos and adult germ cells.</title>
        <authorList>
            <person name="Xiao Y."/>
            <person name="Bedet C."/>
            <person name="Robert V.J."/>
            <person name="Simonet T."/>
            <person name="Dunkelbarger S."/>
            <person name="Rakotomalala C."/>
            <person name="Soete G."/>
            <person name="Korswagen H.C."/>
            <person name="Strome S."/>
            <person name="Palladino F."/>
        </authorList>
    </citation>
    <scope>FUNCTION</scope>
    <scope>INTERACTION WITH SET-2</scope>
</reference>
<reference key="9">
    <citation type="journal article" date="2014" name="Nucleic Acids Res.">
        <title>A role for WDR5 in TRA-1/Gli mediated transcriptional control of the sperm/oocyte switch in C. elegans.</title>
        <authorList>
            <person name="Li T."/>
            <person name="Kelly W.G."/>
        </authorList>
    </citation>
    <scope>FUNCTION</scope>
    <scope>SUBCELLULAR LOCATION</scope>
    <scope>TISSUE SPECIFICITY</scope>
    <scope>DISRUPTION PHENOTYPE</scope>
</reference>
<reference key="10">
    <citation type="journal article" date="2014" name="Science">
        <title>Sequential histone-modifying activities determine the robustness of transdifferentiation.</title>
        <authorList>
            <person name="Zuryn S."/>
            <person name="Ahier A."/>
            <person name="Portoso M."/>
            <person name="White E.R."/>
            <person name="Morin M.C."/>
            <person name="Margueron R."/>
            <person name="Jarriault S."/>
        </authorList>
    </citation>
    <scope>FUNCTION</scope>
    <scope>INTERACTION WITH JMJD-3.1; CEH-6; SOX-2; SEM-4 AND EGL-17</scope>
</reference>
<reference key="11">
    <citation type="journal article" date="2017" name="Nature">
        <title>Mono-unsaturated fatty acids link H3K4me3 modifiers to C. elegans lifespan.</title>
        <authorList>
            <person name="Han S."/>
            <person name="Schroeder E.A."/>
            <person name="Silva-Garcia C.G."/>
            <person name="Hebestreit K."/>
            <person name="Mair W.B."/>
            <person name="Brunet A."/>
        </authorList>
    </citation>
    <scope>FUNCTION</scope>
    <scope>DISRUPTION PHENOTYPE</scope>
</reference>
<reference evidence="14" key="12">
    <citation type="journal article" date="2019" name="Nucleic Acids Res.">
        <title>Physical and functional interaction between SET1/COMPASS complex component CFP-1 and a Sin3S HDAC complex in C. elegans.</title>
        <authorList>
            <person name="Beurton F."/>
            <person name="Stempor P."/>
            <person name="Caron M."/>
            <person name="Appert A."/>
            <person name="Dong Y."/>
            <person name="Chen R.A."/>
            <person name="Cluet D."/>
            <person name="Coute Y."/>
            <person name="Herbette M."/>
            <person name="Huang N."/>
            <person name="Polveche H."/>
            <person name="Spichty M."/>
            <person name="Bedet C."/>
            <person name="Ahringer J."/>
            <person name="Palladino F."/>
        </authorList>
    </citation>
    <scope>IDENTIFICATION IN THE SET2 COMPLEX</scope>
    <scope>INTERACTION WITH CFP-1; ASH-2; DPY-30 AND HDA-1</scope>
</reference>
<feature type="chain" id="PRO_0000051503" description="WD repeat-containing protein wdr-5.1">
    <location>
        <begin position="1"/>
        <end position="376"/>
    </location>
</feature>
<feature type="repeat" description="WD 1">
    <location>
        <begin position="85"/>
        <end position="115"/>
    </location>
</feature>
<feature type="repeat" description="WD 2">
    <location>
        <begin position="127"/>
        <end position="157"/>
    </location>
</feature>
<feature type="repeat" description="WD 3">
    <location>
        <begin position="169"/>
        <end position="199"/>
    </location>
</feature>
<feature type="repeat" description="WD 4">
    <location>
        <begin position="211"/>
        <end position="241"/>
    </location>
</feature>
<feature type="repeat" description="WD 5">
    <location>
        <begin position="254"/>
        <end position="284"/>
    </location>
</feature>
<feature type="repeat" description="WD 6">
    <location>
        <begin position="296"/>
        <end position="329"/>
    </location>
</feature>
<feature type="repeat" description="WD 7">
    <location>
        <begin position="341"/>
        <end position="373"/>
    </location>
</feature>
<feature type="region of interest" description="Disordered" evidence="2">
    <location>
        <begin position="1"/>
        <end position="70"/>
    </location>
</feature>
<feature type="compositionally biased region" description="Polar residues" evidence="2">
    <location>
        <begin position="1"/>
        <end position="24"/>
    </location>
</feature>
<feature type="compositionally biased region" description="Low complexity" evidence="2">
    <location>
        <begin position="25"/>
        <end position="53"/>
    </location>
</feature>
<feature type="site" description="Important for interaction with histone H3" evidence="1">
    <location>
        <position position="149"/>
    </location>
</feature>
<feature type="site" description="Important for interaction with histone H3" evidence="1">
    <location>
        <position position="175"/>
    </location>
</feature>
<feature type="site" description="Important for interaction with histone H3" evidence="1">
    <location>
        <position position="305"/>
    </location>
</feature>
<feature type="site" description="Important for interaction with histone H3" evidence="1">
    <location>
        <position position="364"/>
    </location>
</feature>
<proteinExistence type="evidence at protein level"/>
<organism>
    <name type="scientific">Caenorhabditis elegans</name>
    <dbReference type="NCBI Taxonomy" id="6239"/>
    <lineage>
        <taxon>Eukaryota</taxon>
        <taxon>Metazoa</taxon>
        <taxon>Ecdysozoa</taxon>
        <taxon>Nematoda</taxon>
        <taxon>Chromadorea</taxon>
        <taxon>Rhabditida</taxon>
        <taxon>Rhabditina</taxon>
        <taxon>Rhabditomorpha</taxon>
        <taxon>Rhabditoidea</taxon>
        <taxon>Rhabditidae</taxon>
        <taxon>Peloderinae</taxon>
        <taxon>Caenorhabditis</taxon>
    </lineage>
</organism>
<gene>
    <name type="primary">wdr-5.1</name>
    <name type="synonym">swd-3.1</name>
    <name type="synonym">tag-125</name>
    <name type="ORF">C14B1.4</name>
</gene>
<protein>
    <recommendedName>
        <fullName>WD repeat-containing protein wdr-5.1</fullName>
    </recommendedName>
</protein>
<name>WDR51_CAEEL</name>